<organism>
    <name type="scientific">Rattus norvegicus</name>
    <name type="common">Rat</name>
    <dbReference type="NCBI Taxonomy" id="10116"/>
    <lineage>
        <taxon>Eukaryota</taxon>
        <taxon>Metazoa</taxon>
        <taxon>Chordata</taxon>
        <taxon>Craniata</taxon>
        <taxon>Vertebrata</taxon>
        <taxon>Euteleostomi</taxon>
        <taxon>Mammalia</taxon>
        <taxon>Eutheria</taxon>
        <taxon>Euarchontoglires</taxon>
        <taxon>Glires</taxon>
        <taxon>Rodentia</taxon>
        <taxon>Myomorpha</taxon>
        <taxon>Muroidea</taxon>
        <taxon>Muridae</taxon>
        <taxon>Murinae</taxon>
        <taxon>Rattus</taxon>
    </lineage>
</organism>
<gene>
    <name type="primary">Mx2</name>
</gene>
<comment type="function">
    <text evidence="6">Interferon-induced dynamin-like GTPase with antiviral activity against vesicular stomatitis virus (VSV).</text>
</comment>
<comment type="subcellular location">
    <subcellularLocation>
        <location evidence="6">Cytoplasm</location>
    </subcellularLocation>
</comment>
<comment type="induction">
    <text evidence="5 6">By type I and type III interferons.</text>
</comment>
<comment type="similarity">
    <text evidence="3">Belongs to the TRAFAC class dynamin-like GTPase superfamily. Dynamin/Fzo/YdjA family.</text>
</comment>
<feature type="chain" id="PRO_0000206600" description="Interferon-induced GTP-binding protein Mx2">
    <location>
        <begin position="1"/>
        <end position="659"/>
    </location>
</feature>
<feature type="domain" description="Dynamin-type G" evidence="3">
    <location>
        <begin position="65"/>
        <end position="338"/>
    </location>
</feature>
<feature type="domain" description="GED" evidence="2">
    <location>
        <begin position="571"/>
        <end position="659"/>
    </location>
</feature>
<feature type="region of interest" description="G1 motif" evidence="3">
    <location>
        <begin position="75"/>
        <end position="82"/>
    </location>
</feature>
<feature type="region of interest" description="G2 motif" evidence="3">
    <location>
        <begin position="100"/>
        <end position="102"/>
    </location>
</feature>
<feature type="region of interest" description="G3 motif" evidence="3">
    <location>
        <begin position="176"/>
        <end position="179"/>
    </location>
</feature>
<feature type="region of interest" description="G4 motif" evidence="3">
    <location>
        <begin position="245"/>
        <end position="248"/>
    </location>
</feature>
<feature type="region of interest" description="G5 motif" evidence="3">
    <location>
        <begin position="277"/>
        <end position="280"/>
    </location>
</feature>
<feature type="region of interest" description="Disordered" evidence="4">
    <location>
        <begin position="547"/>
        <end position="567"/>
    </location>
</feature>
<feature type="binding site" evidence="1">
    <location>
        <begin position="75"/>
        <end position="82"/>
    </location>
    <ligand>
        <name>GTP</name>
        <dbReference type="ChEBI" id="CHEBI:37565"/>
    </ligand>
</feature>
<feature type="binding site" evidence="1">
    <location>
        <begin position="176"/>
        <end position="180"/>
    </location>
    <ligand>
        <name>GTP</name>
        <dbReference type="ChEBI" id="CHEBI:37565"/>
    </ligand>
</feature>
<feature type="binding site" evidence="1">
    <location>
        <begin position="245"/>
        <end position="248"/>
    </location>
    <ligand>
        <name>GTP</name>
        <dbReference type="ChEBI" id="CHEBI:37565"/>
    </ligand>
</feature>
<accession>P18589</accession>
<sequence length="659" mass="75074">MVLSTEENRSVDLVNLPSVPLPDGEAGVGENNKDSLNNLCSQYEEKVRPCIDLIDSLRALGVEQDLALPAIAVIGDQSSGKSSVLEALSGVALPRGSGIVTRCPLVLKLKKLNQGEEWKGKVTYDDIEVELSDPSEVEEAINTGQNHIAGVGLGISDKLISLDVSSPHVPDLTLIDLPGITRVAVGNQPADIGRQIKRLITNYIQKQETINLVVVPSNVDIATTEALSMAQKVDPDGDRTIGILTKPDLVDRGTEDKVVDVVRNLVCHLKKGYMIVKCRGQQDIQEQLSLAEALQKEQVFFKEHPQFRALLEDGKATVPCLAERLTMELISHICKSLPLLENQIKESHQSTSEELQKYGADIPEDENEKTLFLIEKINAFNQDITAIVEGEEIVREKECRLFTKLRKEFFLWSEEIERNFQKGSDALYKEVYTFEMQYRGRELPGFVNYKTFENIIRRQIKTLEEPAMEMLHKVTEIVRAAFTTVSEKNFSEFFNLHRTTKSKLEDIRLEQETEAEKSIRLHFQMEQIIYCQDQIYRKALQKVREEEAEEEERKHGKSRSSQSKNLQTSSMDEIFQHLNAYRQEAHNRISSHIPLIIQYFILKMFAEKLQKGMLQLLQDKDSCSWLLKEHSDTSEKRRFLKERLARLAQAQRRLAKFPG</sequence>
<keyword id="KW-0051">Antiviral defense</keyword>
<keyword id="KW-0963">Cytoplasm</keyword>
<keyword id="KW-0342">GTP-binding</keyword>
<keyword id="KW-0391">Immunity</keyword>
<keyword id="KW-0399">Innate immunity</keyword>
<keyword id="KW-0547">Nucleotide-binding</keyword>
<keyword id="KW-1185">Reference proteome</keyword>
<evidence type="ECO:0000255" key="1"/>
<evidence type="ECO:0000255" key="2">
    <source>
        <dbReference type="PROSITE-ProRule" id="PRU00720"/>
    </source>
</evidence>
<evidence type="ECO:0000255" key="3">
    <source>
        <dbReference type="PROSITE-ProRule" id="PRU01055"/>
    </source>
</evidence>
<evidence type="ECO:0000256" key="4">
    <source>
        <dbReference type="SAM" id="MobiDB-lite"/>
    </source>
</evidence>
<evidence type="ECO:0000269" key="5">
    <source>
    </source>
</evidence>
<evidence type="ECO:0000269" key="6">
    <source>
    </source>
</evidence>
<dbReference type="EMBL" id="X52712">
    <property type="protein sequence ID" value="CAA36936.1"/>
    <property type="molecule type" value="mRNA"/>
</dbReference>
<dbReference type="PIR" id="S11736">
    <property type="entry name" value="S11736"/>
</dbReference>
<dbReference type="SMR" id="P18589"/>
<dbReference type="FunCoup" id="P18589">
    <property type="interactions" value="95"/>
</dbReference>
<dbReference type="PhosphoSitePlus" id="P18589"/>
<dbReference type="AGR" id="RGD:628821"/>
<dbReference type="RGD" id="628821">
    <property type="gene designation" value="Mx2"/>
</dbReference>
<dbReference type="InParanoid" id="P18589"/>
<dbReference type="Reactome" id="R-RNO-1169408">
    <property type="pathway name" value="ISG15 antiviral mechanism"/>
</dbReference>
<dbReference type="PRO" id="PR:P18589"/>
<dbReference type="Proteomes" id="UP000002494">
    <property type="component" value="Unplaced"/>
</dbReference>
<dbReference type="GO" id="GO:0005737">
    <property type="term" value="C:cytoplasm"/>
    <property type="evidence" value="ECO:0000314"/>
    <property type="project" value="UniProtKB"/>
</dbReference>
<dbReference type="GO" id="GO:0070382">
    <property type="term" value="C:exocytic vesicle"/>
    <property type="evidence" value="ECO:0000266"/>
    <property type="project" value="RGD"/>
</dbReference>
<dbReference type="GO" id="GO:0005874">
    <property type="term" value="C:microtubule"/>
    <property type="evidence" value="ECO:0000318"/>
    <property type="project" value="GO_Central"/>
</dbReference>
<dbReference type="GO" id="GO:0005643">
    <property type="term" value="C:nuclear pore"/>
    <property type="evidence" value="ECO:0000266"/>
    <property type="project" value="RGD"/>
</dbReference>
<dbReference type="GO" id="GO:0005634">
    <property type="term" value="C:nucleus"/>
    <property type="evidence" value="ECO:0000266"/>
    <property type="project" value="RGD"/>
</dbReference>
<dbReference type="GO" id="GO:0005886">
    <property type="term" value="C:plasma membrane"/>
    <property type="evidence" value="ECO:0000318"/>
    <property type="project" value="GO_Central"/>
</dbReference>
<dbReference type="GO" id="GO:0098793">
    <property type="term" value="C:presynapse"/>
    <property type="evidence" value="ECO:0007669"/>
    <property type="project" value="GOC"/>
</dbReference>
<dbReference type="GO" id="GO:0045202">
    <property type="term" value="C:synapse"/>
    <property type="evidence" value="ECO:0000318"/>
    <property type="project" value="GO_Central"/>
</dbReference>
<dbReference type="GO" id="GO:0005525">
    <property type="term" value="F:GTP binding"/>
    <property type="evidence" value="ECO:0000266"/>
    <property type="project" value="RGD"/>
</dbReference>
<dbReference type="GO" id="GO:0003924">
    <property type="term" value="F:GTPase activity"/>
    <property type="evidence" value="ECO:0000266"/>
    <property type="project" value="RGD"/>
</dbReference>
<dbReference type="GO" id="GO:0008017">
    <property type="term" value="F:microtubule binding"/>
    <property type="evidence" value="ECO:0000318"/>
    <property type="project" value="GO_Central"/>
</dbReference>
<dbReference type="GO" id="GO:0071357">
    <property type="term" value="P:cellular response to type I interferon"/>
    <property type="evidence" value="ECO:0000266"/>
    <property type="project" value="RGD"/>
</dbReference>
<dbReference type="GO" id="GO:0051607">
    <property type="term" value="P:defense response to virus"/>
    <property type="evidence" value="ECO:0000266"/>
    <property type="project" value="RGD"/>
</dbReference>
<dbReference type="GO" id="GO:0016197">
    <property type="term" value="P:endosomal transport"/>
    <property type="evidence" value="ECO:0000266"/>
    <property type="project" value="RGD"/>
</dbReference>
<dbReference type="GO" id="GO:1901253">
    <property type="term" value="P:negative regulation of intracellular transport of viral material"/>
    <property type="evidence" value="ECO:0000266"/>
    <property type="project" value="RGD"/>
</dbReference>
<dbReference type="GO" id="GO:0045071">
    <property type="term" value="P:negative regulation of viral genome replication"/>
    <property type="evidence" value="ECO:0000266"/>
    <property type="project" value="RGD"/>
</dbReference>
<dbReference type="GO" id="GO:0031623">
    <property type="term" value="P:receptor internalization"/>
    <property type="evidence" value="ECO:0000318"/>
    <property type="project" value="GO_Central"/>
</dbReference>
<dbReference type="GO" id="GO:0051726">
    <property type="term" value="P:regulation of cell cycle"/>
    <property type="evidence" value="ECO:0000266"/>
    <property type="project" value="RGD"/>
</dbReference>
<dbReference type="GO" id="GO:0046822">
    <property type="term" value="P:regulation of nucleocytoplasmic transport"/>
    <property type="evidence" value="ECO:0000266"/>
    <property type="project" value="RGD"/>
</dbReference>
<dbReference type="GO" id="GO:0035455">
    <property type="term" value="P:response to interferon-alpha"/>
    <property type="evidence" value="ECO:0000266"/>
    <property type="project" value="RGD"/>
</dbReference>
<dbReference type="GO" id="GO:0009615">
    <property type="term" value="P:response to virus"/>
    <property type="evidence" value="ECO:0000314"/>
    <property type="project" value="UniProtKB"/>
</dbReference>
<dbReference type="GO" id="GO:0016185">
    <property type="term" value="P:synaptic vesicle budding from presynaptic endocytic zone membrane"/>
    <property type="evidence" value="ECO:0000318"/>
    <property type="project" value="GO_Central"/>
</dbReference>
<dbReference type="CDD" id="cd08771">
    <property type="entry name" value="DLP_1"/>
    <property type="match status" value="1"/>
</dbReference>
<dbReference type="FunFam" id="1.20.120.1240:FF:000007">
    <property type="entry name" value="Interferon-induced GTP-binding protein Mx1"/>
    <property type="match status" value="1"/>
</dbReference>
<dbReference type="FunFam" id="3.40.50.300:FF:000621">
    <property type="entry name" value="Interferon-induced GTP-binding protein Mx1"/>
    <property type="match status" value="1"/>
</dbReference>
<dbReference type="Gene3D" id="1.20.120.1240">
    <property type="entry name" value="Dynamin, middle domain"/>
    <property type="match status" value="1"/>
</dbReference>
<dbReference type="Gene3D" id="3.40.50.300">
    <property type="entry name" value="P-loop containing nucleotide triphosphate hydrolases"/>
    <property type="match status" value="1"/>
</dbReference>
<dbReference type="InterPro" id="IPR022812">
    <property type="entry name" value="Dynamin"/>
</dbReference>
<dbReference type="InterPro" id="IPR001401">
    <property type="entry name" value="Dynamin_GTPase"/>
</dbReference>
<dbReference type="InterPro" id="IPR019762">
    <property type="entry name" value="Dynamin_GTPase_CS"/>
</dbReference>
<dbReference type="InterPro" id="IPR045063">
    <property type="entry name" value="Dynamin_N"/>
</dbReference>
<dbReference type="InterPro" id="IPR000375">
    <property type="entry name" value="Dynamin_stalk"/>
</dbReference>
<dbReference type="InterPro" id="IPR030381">
    <property type="entry name" value="G_DYNAMIN_dom"/>
</dbReference>
<dbReference type="InterPro" id="IPR003130">
    <property type="entry name" value="GED"/>
</dbReference>
<dbReference type="InterPro" id="IPR020850">
    <property type="entry name" value="GED_dom"/>
</dbReference>
<dbReference type="InterPro" id="IPR027417">
    <property type="entry name" value="P-loop_NTPase"/>
</dbReference>
<dbReference type="PANTHER" id="PTHR11566">
    <property type="entry name" value="DYNAMIN"/>
    <property type="match status" value="1"/>
</dbReference>
<dbReference type="PANTHER" id="PTHR11566:SF217">
    <property type="entry name" value="INTERFERON-INDUCED GTP-BINDING PROTEIN MX1"/>
    <property type="match status" value="1"/>
</dbReference>
<dbReference type="Pfam" id="PF01031">
    <property type="entry name" value="Dynamin_M"/>
    <property type="match status" value="1"/>
</dbReference>
<dbReference type="Pfam" id="PF00350">
    <property type="entry name" value="Dynamin_N"/>
    <property type="match status" value="1"/>
</dbReference>
<dbReference type="Pfam" id="PF02212">
    <property type="entry name" value="GED"/>
    <property type="match status" value="1"/>
</dbReference>
<dbReference type="PRINTS" id="PR00195">
    <property type="entry name" value="DYNAMIN"/>
</dbReference>
<dbReference type="SMART" id="SM00053">
    <property type="entry name" value="DYNc"/>
    <property type="match status" value="1"/>
</dbReference>
<dbReference type="SMART" id="SM00302">
    <property type="entry name" value="GED"/>
    <property type="match status" value="1"/>
</dbReference>
<dbReference type="SUPFAM" id="SSF52540">
    <property type="entry name" value="P-loop containing nucleoside triphosphate hydrolases"/>
    <property type="match status" value="1"/>
</dbReference>
<dbReference type="PROSITE" id="PS00410">
    <property type="entry name" value="G_DYNAMIN_1"/>
    <property type="match status" value="1"/>
</dbReference>
<dbReference type="PROSITE" id="PS51718">
    <property type="entry name" value="G_DYNAMIN_2"/>
    <property type="match status" value="1"/>
</dbReference>
<dbReference type="PROSITE" id="PS51388">
    <property type="entry name" value="GED"/>
    <property type="match status" value="1"/>
</dbReference>
<reference key="1">
    <citation type="journal article" date="1990" name="J. Virol.">
        <title>Activity of rat Mx proteins against a rhabdovirus.</title>
        <authorList>
            <person name="Meier E."/>
            <person name="Kunz G."/>
            <person name="Haller O."/>
            <person name="Arnheiter H."/>
        </authorList>
    </citation>
    <scope>NUCLEOTIDE SEQUENCE [MRNA]</scope>
    <scope>FUNCTION</scope>
    <scope>SUBCELLULAR LOCATION</scope>
    <scope>INDUCTION</scope>
</reference>
<reference key="2">
    <citation type="journal article" date="2007" name="Microbes Infect.">
        <title>The Mx GTPase family of interferon-induced antiviral proteins.</title>
        <authorList>
            <person name="Haller O."/>
            <person name="Stertz S."/>
            <person name="Kochs G."/>
        </authorList>
    </citation>
    <scope>REVIEW</scope>
    <scope>INDUCTION</scope>
</reference>
<name>MX2_RAT</name>
<proteinExistence type="evidence at transcript level"/>
<protein>
    <recommendedName>
        <fullName>Interferon-induced GTP-binding protein Mx2</fullName>
    </recommendedName>
    <alternativeName>
        <fullName>Myxovirus resistance protein 2</fullName>
    </alternativeName>
</protein>